<evidence type="ECO:0000255" key="1">
    <source>
        <dbReference type="HAMAP-Rule" id="MF_01124"/>
    </source>
</evidence>
<proteinExistence type="inferred from homology"/>
<gene>
    <name evidence="1" type="primary">mecA</name>
    <name type="ordered locus">Exig_2049</name>
</gene>
<dbReference type="EMBL" id="CP001022">
    <property type="protein sequence ID" value="ACB61501.1"/>
    <property type="molecule type" value="Genomic_DNA"/>
</dbReference>
<dbReference type="RefSeq" id="WP_012370919.1">
    <property type="nucleotide sequence ID" value="NC_010556.1"/>
</dbReference>
<dbReference type="SMR" id="B1YJC0"/>
<dbReference type="STRING" id="262543.Exig_2049"/>
<dbReference type="KEGG" id="esi:Exig_2049"/>
<dbReference type="eggNOG" id="COG4862">
    <property type="taxonomic scope" value="Bacteria"/>
</dbReference>
<dbReference type="HOGENOM" id="CLU_071496_2_1_9"/>
<dbReference type="OrthoDB" id="2360201at2"/>
<dbReference type="Proteomes" id="UP000001681">
    <property type="component" value="Chromosome"/>
</dbReference>
<dbReference type="GO" id="GO:0030674">
    <property type="term" value="F:protein-macromolecule adaptor activity"/>
    <property type="evidence" value="ECO:0007669"/>
    <property type="project" value="UniProtKB-UniRule"/>
</dbReference>
<dbReference type="Gene3D" id="3.30.70.1950">
    <property type="match status" value="1"/>
</dbReference>
<dbReference type="HAMAP" id="MF_01124">
    <property type="entry name" value="MecA"/>
    <property type="match status" value="1"/>
</dbReference>
<dbReference type="InterPro" id="IPR038471">
    <property type="entry name" value="MecA_C_sf"/>
</dbReference>
<dbReference type="InterPro" id="IPR008681">
    <property type="entry name" value="Neg-reg_MecA"/>
</dbReference>
<dbReference type="NCBIfam" id="NF002644">
    <property type="entry name" value="PRK02315.1-5"/>
    <property type="match status" value="1"/>
</dbReference>
<dbReference type="PANTHER" id="PTHR39161">
    <property type="entry name" value="ADAPTER PROTEIN MECA"/>
    <property type="match status" value="1"/>
</dbReference>
<dbReference type="PANTHER" id="PTHR39161:SF1">
    <property type="entry name" value="ADAPTER PROTEIN MECA 1"/>
    <property type="match status" value="1"/>
</dbReference>
<dbReference type="Pfam" id="PF05389">
    <property type="entry name" value="MecA"/>
    <property type="match status" value="1"/>
</dbReference>
<dbReference type="PIRSF" id="PIRSF029008">
    <property type="entry name" value="MecA"/>
    <property type="match status" value="1"/>
</dbReference>
<comment type="function">
    <text evidence="1">Enables the recognition and targeting of unfolded and aggregated proteins to the ClpC protease or to other proteins involved in proteolysis.</text>
</comment>
<comment type="subunit">
    <text evidence="1">Homodimer.</text>
</comment>
<comment type="domain">
    <text>The N-terminal domain probably binds unfolded/aggregated proteins; the C-terminal domain interacts with ClpC.</text>
</comment>
<comment type="similarity">
    <text evidence="1">Belongs to the MecA family.</text>
</comment>
<name>MECA_EXIS2</name>
<accession>B1YJC0</accession>
<organism>
    <name type="scientific">Exiguobacterium sibiricum (strain DSM 17290 / CCUG 55495 / CIP 109462 / JCM 13490 / 255-15)</name>
    <dbReference type="NCBI Taxonomy" id="262543"/>
    <lineage>
        <taxon>Bacteria</taxon>
        <taxon>Bacillati</taxon>
        <taxon>Bacillota</taxon>
        <taxon>Bacilli</taxon>
        <taxon>Bacillales</taxon>
        <taxon>Bacillales Family XII. Incertae Sedis</taxon>
        <taxon>Exiguobacterium</taxon>
    </lineage>
</organism>
<reference key="1">
    <citation type="submission" date="2008-04" db="EMBL/GenBank/DDBJ databases">
        <title>Complete sequence of chromosome of Exiguobacterium sibiricum 255-15.</title>
        <authorList>
            <consortium name="US DOE Joint Genome Institute"/>
            <person name="Copeland A."/>
            <person name="Lucas S."/>
            <person name="Lapidus A."/>
            <person name="Glavina del Rio T."/>
            <person name="Dalin E."/>
            <person name="Tice H."/>
            <person name="Bruce D."/>
            <person name="Goodwin L."/>
            <person name="Pitluck S."/>
            <person name="Kiss H."/>
            <person name="Chertkov O."/>
            <person name="Monk C."/>
            <person name="Brettin T."/>
            <person name="Detter J.C."/>
            <person name="Han C."/>
            <person name="Kuske C.R."/>
            <person name="Schmutz J."/>
            <person name="Larimer F."/>
            <person name="Land M."/>
            <person name="Hauser L."/>
            <person name="Kyrpides N."/>
            <person name="Mikhailova N."/>
            <person name="Vishnivetskaya T."/>
            <person name="Rodrigues D.F."/>
            <person name="Gilichinsky D."/>
            <person name="Tiedje J."/>
            <person name="Richardson P."/>
        </authorList>
    </citation>
    <scope>NUCLEOTIDE SEQUENCE [LARGE SCALE GENOMIC DNA]</scope>
    <source>
        <strain>DSM 17290 / CCUG 55495 / CIP 109462 / JCM 13490 / 255-15</strain>
    </source>
</reference>
<sequence>MKIERVNDNTVKFFITYTDIERRGFARDEIWYNRERGEQLFWQMMDEANEKESISFEGPLWIQVQAFEKGLEVTVTIAKTTIDGEQVDEDELDSLLRSAMSDAEEKETELSQDVLFETTDFEHIIALSQYAEAPIFEEVKTSLYQKDGLYLLHLHFKEETEVEEQENVMSLIAEYLNFSEQTIHPVAEYGKVIVPNDVFAFIRKHFPN</sequence>
<protein>
    <recommendedName>
        <fullName evidence="1">Adapter protein MecA</fullName>
    </recommendedName>
</protein>
<feature type="chain" id="PRO_1000137280" description="Adapter protein MecA">
    <location>
        <begin position="1"/>
        <end position="208"/>
    </location>
</feature>
<keyword id="KW-1185">Reference proteome</keyword>